<dbReference type="EC" id="2.4.2.28" evidence="1"/>
<dbReference type="EMBL" id="CM000071">
    <property type="protein sequence ID" value="EAL25138.1"/>
    <property type="molecule type" value="Genomic_DNA"/>
</dbReference>
<dbReference type="SMR" id="Q291H4"/>
<dbReference type="FunCoup" id="Q291H4">
    <property type="interactions" value="1429"/>
</dbReference>
<dbReference type="STRING" id="46245.Q291H4"/>
<dbReference type="eggNOG" id="KOG3985">
    <property type="taxonomic scope" value="Eukaryota"/>
</dbReference>
<dbReference type="HOGENOM" id="CLU_054456_0_0_1"/>
<dbReference type="InParanoid" id="Q291H4"/>
<dbReference type="OMA" id="ADPFCPE"/>
<dbReference type="PhylomeDB" id="Q291H4"/>
<dbReference type="UniPathway" id="UPA00904">
    <property type="reaction ID" value="UER00873"/>
</dbReference>
<dbReference type="Proteomes" id="UP000001819">
    <property type="component" value="Unplaced"/>
</dbReference>
<dbReference type="GO" id="GO:0005829">
    <property type="term" value="C:cytosol"/>
    <property type="evidence" value="ECO:0007669"/>
    <property type="project" value="TreeGrafter"/>
</dbReference>
<dbReference type="GO" id="GO:0005634">
    <property type="term" value="C:nucleus"/>
    <property type="evidence" value="ECO:0007669"/>
    <property type="project" value="UniProtKB-SubCell"/>
</dbReference>
<dbReference type="GO" id="GO:0017061">
    <property type="term" value="F:S-methyl-5-thioadenosine phosphorylase activity"/>
    <property type="evidence" value="ECO:0007669"/>
    <property type="project" value="UniProtKB-UniRule"/>
</dbReference>
<dbReference type="GO" id="GO:0019509">
    <property type="term" value="P:L-methionine salvage from methylthioadenosine"/>
    <property type="evidence" value="ECO:0007669"/>
    <property type="project" value="UniProtKB-UniRule"/>
</dbReference>
<dbReference type="GO" id="GO:0006166">
    <property type="term" value="P:purine ribonucleoside salvage"/>
    <property type="evidence" value="ECO:0007669"/>
    <property type="project" value="UniProtKB-KW"/>
</dbReference>
<dbReference type="CDD" id="cd09010">
    <property type="entry name" value="MTAP_SsMTAPII_like_MTIP"/>
    <property type="match status" value="1"/>
</dbReference>
<dbReference type="FunFam" id="3.40.50.1580:FF:000006">
    <property type="entry name" value="Purine nucleoside phosphorylase"/>
    <property type="match status" value="1"/>
</dbReference>
<dbReference type="Gene3D" id="3.40.50.1580">
    <property type="entry name" value="Nucleoside phosphorylase domain"/>
    <property type="match status" value="1"/>
</dbReference>
<dbReference type="HAMAP" id="MF_01963">
    <property type="entry name" value="MTAP"/>
    <property type="match status" value="1"/>
</dbReference>
<dbReference type="InterPro" id="IPR010044">
    <property type="entry name" value="MTAP"/>
</dbReference>
<dbReference type="InterPro" id="IPR000845">
    <property type="entry name" value="Nucleoside_phosphorylase_d"/>
</dbReference>
<dbReference type="InterPro" id="IPR035994">
    <property type="entry name" value="Nucleoside_phosphorylase_sf"/>
</dbReference>
<dbReference type="InterPro" id="IPR018099">
    <property type="entry name" value="Purine_phosphorylase-2_CS"/>
</dbReference>
<dbReference type="NCBIfam" id="TIGR01694">
    <property type="entry name" value="MTAP"/>
    <property type="match status" value="1"/>
</dbReference>
<dbReference type="PANTHER" id="PTHR42679">
    <property type="entry name" value="S-METHYL-5'-THIOADENOSINE PHOSPHORYLASE"/>
    <property type="match status" value="1"/>
</dbReference>
<dbReference type="PANTHER" id="PTHR42679:SF2">
    <property type="entry name" value="S-METHYL-5'-THIOADENOSINE PHOSPHORYLASE"/>
    <property type="match status" value="1"/>
</dbReference>
<dbReference type="Pfam" id="PF01048">
    <property type="entry name" value="PNP_UDP_1"/>
    <property type="match status" value="1"/>
</dbReference>
<dbReference type="SUPFAM" id="SSF53167">
    <property type="entry name" value="Purine and uridine phosphorylases"/>
    <property type="match status" value="1"/>
</dbReference>
<dbReference type="PROSITE" id="PS01240">
    <property type="entry name" value="PNP_MTAP_2"/>
    <property type="match status" value="1"/>
</dbReference>
<proteinExistence type="inferred from homology"/>
<organism>
    <name type="scientific">Drosophila pseudoobscura pseudoobscura</name>
    <name type="common">Fruit fly</name>
    <dbReference type="NCBI Taxonomy" id="46245"/>
    <lineage>
        <taxon>Eukaryota</taxon>
        <taxon>Metazoa</taxon>
        <taxon>Ecdysozoa</taxon>
        <taxon>Arthropoda</taxon>
        <taxon>Hexapoda</taxon>
        <taxon>Insecta</taxon>
        <taxon>Pterygota</taxon>
        <taxon>Neoptera</taxon>
        <taxon>Endopterygota</taxon>
        <taxon>Diptera</taxon>
        <taxon>Brachycera</taxon>
        <taxon>Muscomorpha</taxon>
        <taxon>Ephydroidea</taxon>
        <taxon>Drosophilidae</taxon>
        <taxon>Drosophila</taxon>
        <taxon>Sophophora</taxon>
    </lineage>
</organism>
<name>MTAP_DROPS</name>
<evidence type="ECO:0000255" key="1">
    <source>
        <dbReference type="HAMAP-Rule" id="MF_03155"/>
    </source>
</evidence>
<comment type="function">
    <text evidence="1">Catalyzes the reversible phosphorylation of S-methyl-5'-thioadenosine (MTA) to adenine and 5-methylthioribose-1-phosphate. Involved in the breakdown of MTA, a major by-product of polyamine biosynthesis. Responsible for the first step in the methionine salvage pathway after MTA has been generated from S-adenosylmethionine. Has broad substrate specificity with 6-aminopurine nucleosides as preferred substrates.</text>
</comment>
<comment type="catalytic activity">
    <reaction evidence="1">
        <text>S-methyl-5'-thioadenosine + phosphate = 5-(methylsulfanyl)-alpha-D-ribose 1-phosphate + adenine</text>
        <dbReference type="Rhea" id="RHEA:11852"/>
        <dbReference type="ChEBI" id="CHEBI:16708"/>
        <dbReference type="ChEBI" id="CHEBI:17509"/>
        <dbReference type="ChEBI" id="CHEBI:43474"/>
        <dbReference type="ChEBI" id="CHEBI:58533"/>
        <dbReference type="EC" id="2.4.2.28"/>
    </reaction>
</comment>
<comment type="pathway">
    <text evidence="1">Amino-acid biosynthesis; L-methionine biosynthesis via salvage pathway; S-methyl-5-thio-alpha-D-ribose 1-phosphate from S-methyl-5'-thioadenosine (phosphorylase route): step 1/1.</text>
</comment>
<comment type="subunit">
    <text evidence="1">Homotrimer.</text>
</comment>
<comment type="subcellular location">
    <subcellularLocation>
        <location evidence="1">Cytoplasm</location>
    </subcellularLocation>
    <subcellularLocation>
        <location evidence="1">Nucleus</location>
    </subcellularLocation>
</comment>
<comment type="similarity">
    <text evidence="1">Belongs to the PNP/MTAP phosphorylase family. MTAP subfamily.</text>
</comment>
<sequence length="289" mass="31844">MLHIKCKDTDLDPIPVKIGIIGGSGLDDPDILENRQEKVISTPYGEPSDALIQGEIGGVQCVLLARHGRKHDIMPSNVNYRANIWALRDVGCTHLIVSTACGSLREQIKPGNLVMPHDFIDRTTKRSQTFYDGSATSPRGVCHLPMYPAFSERTRNILIEAAKELEIPAHEKATIVTIEGPRFSSRSESLMFREWGGDLINMTTCPEVVLAKEAGLLYGSVAIATDYDCWRMGCEGVNVQDVLKTFAENVIKVKKILVNAVGRIAKEDWSEDILNAKQCVCNNTMSGAM</sequence>
<reference key="1">
    <citation type="journal article" date="2005" name="Genome Res.">
        <title>Comparative genome sequencing of Drosophila pseudoobscura: chromosomal, gene, and cis-element evolution.</title>
        <authorList>
            <person name="Richards S."/>
            <person name="Liu Y."/>
            <person name="Bettencourt B.R."/>
            <person name="Hradecky P."/>
            <person name="Letovsky S."/>
            <person name="Nielsen R."/>
            <person name="Thornton K."/>
            <person name="Hubisz M.J."/>
            <person name="Chen R."/>
            <person name="Meisel R.P."/>
            <person name="Couronne O."/>
            <person name="Hua S."/>
            <person name="Smith M.A."/>
            <person name="Zhang P."/>
            <person name="Liu J."/>
            <person name="Bussemaker H.J."/>
            <person name="van Batenburg M.F."/>
            <person name="Howells S.L."/>
            <person name="Scherer S.E."/>
            <person name="Sodergren E."/>
            <person name="Matthews B.B."/>
            <person name="Crosby M.A."/>
            <person name="Schroeder A.J."/>
            <person name="Ortiz-Barrientos D."/>
            <person name="Rives C.M."/>
            <person name="Metzker M.L."/>
            <person name="Muzny D.M."/>
            <person name="Scott G."/>
            <person name="Steffen D."/>
            <person name="Wheeler D.A."/>
            <person name="Worley K.C."/>
            <person name="Havlak P."/>
            <person name="Durbin K.J."/>
            <person name="Egan A."/>
            <person name="Gill R."/>
            <person name="Hume J."/>
            <person name="Morgan M.B."/>
            <person name="Miner G."/>
            <person name="Hamilton C."/>
            <person name="Huang Y."/>
            <person name="Waldron L."/>
            <person name="Verduzco D."/>
            <person name="Clerc-Blankenburg K.P."/>
            <person name="Dubchak I."/>
            <person name="Noor M.A.F."/>
            <person name="Anderson W."/>
            <person name="White K.P."/>
            <person name="Clark A.G."/>
            <person name="Schaeffer S.W."/>
            <person name="Gelbart W.M."/>
            <person name="Weinstock G.M."/>
            <person name="Gibbs R.A."/>
        </authorList>
    </citation>
    <scope>NUCLEOTIDE SEQUENCE [LARGE SCALE GENOMIC DNA]</scope>
    <source>
        <strain>MV2-25 / Tucson 14011-0121.94</strain>
    </source>
</reference>
<accession>Q291H4</accession>
<protein>
    <recommendedName>
        <fullName evidence="1">S-methyl-5'-thioadenosine phosphorylase</fullName>
        <ecNumber evidence="1">2.4.2.28</ecNumber>
    </recommendedName>
    <alternativeName>
        <fullName evidence="1">5'-methylthioadenosine phosphorylase</fullName>
        <shortName evidence="1">MTA phosphorylase</shortName>
        <shortName evidence="1">MTAP</shortName>
        <shortName evidence="1">MTAPase</shortName>
    </alternativeName>
</protein>
<feature type="chain" id="PRO_0000415120" description="S-methyl-5'-thioadenosine phosphorylase">
    <location>
        <begin position="1"/>
        <end position="289"/>
    </location>
</feature>
<feature type="binding site" evidence="1">
    <location>
        <position position="24"/>
    </location>
    <ligand>
        <name>phosphate</name>
        <dbReference type="ChEBI" id="CHEBI:43474"/>
    </ligand>
</feature>
<feature type="binding site" evidence="1">
    <location>
        <begin position="66"/>
        <end position="67"/>
    </location>
    <ligand>
        <name>phosphate</name>
        <dbReference type="ChEBI" id="CHEBI:43474"/>
    </ligand>
</feature>
<feature type="binding site" evidence="1">
    <location>
        <begin position="99"/>
        <end position="100"/>
    </location>
    <ligand>
        <name>phosphate</name>
        <dbReference type="ChEBI" id="CHEBI:43474"/>
    </ligand>
</feature>
<feature type="binding site" evidence="1">
    <location>
        <position position="202"/>
    </location>
    <ligand>
        <name>substrate</name>
    </ligand>
</feature>
<feature type="binding site" evidence="1">
    <location>
        <position position="203"/>
    </location>
    <ligand>
        <name>phosphate</name>
        <dbReference type="ChEBI" id="CHEBI:43474"/>
    </ligand>
</feature>
<feature type="binding site" evidence="1">
    <location>
        <begin position="226"/>
        <end position="228"/>
    </location>
    <ligand>
        <name>substrate</name>
    </ligand>
</feature>
<feature type="site" description="Important for substrate specificity" evidence="1">
    <location>
        <position position="184"/>
    </location>
</feature>
<feature type="site" description="Important for substrate specificity" evidence="1">
    <location>
        <position position="239"/>
    </location>
</feature>
<keyword id="KW-0963">Cytoplasm</keyword>
<keyword id="KW-0328">Glycosyltransferase</keyword>
<keyword id="KW-0539">Nucleus</keyword>
<keyword id="KW-0660">Purine salvage</keyword>
<keyword id="KW-1185">Reference proteome</keyword>
<keyword id="KW-0808">Transferase</keyword>
<gene>
    <name type="ORF">GA18442</name>
</gene>